<comment type="function">
    <text evidence="2">GTP hydrolase that promotes the GTP-dependent binding of aminoacyl-tRNA to the A-site of ribosomes during protein biosynthesis.</text>
</comment>
<comment type="catalytic activity">
    <reaction evidence="2">
        <text>GTP + H2O = GDP + phosphate + H(+)</text>
        <dbReference type="Rhea" id="RHEA:19669"/>
        <dbReference type="ChEBI" id="CHEBI:15377"/>
        <dbReference type="ChEBI" id="CHEBI:15378"/>
        <dbReference type="ChEBI" id="CHEBI:37565"/>
        <dbReference type="ChEBI" id="CHEBI:43474"/>
        <dbReference type="ChEBI" id="CHEBI:58189"/>
        <dbReference type="EC" id="3.6.5.3"/>
    </reaction>
    <physiologicalReaction direction="left-to-right" evidence="2">
        <dbReference type="Rhea" id="RHEA:19670"/>
    </physiologicalReaction>
</comment>
<comment type="subunit">
    <text evidence="2">Monomer.</text>
</comment>
<comment type="subcellular location">
    <subcellularLocation>
        <location evidence="2">Cytoplasm</location>
    </subcellularLocation>
</comment>
<comment type="similarity">
    <text evidence="2">Belongs to the TRAFAC class translation factor GTPase superfamily. Classic translation factor GTPase family. EF-Tu/EF-1A subfamily.</text>
</comment>
<name>EFTU_LACLS</name>
<proteinExistence type="inferred from homology"/>
<organism>
    <name type="scientific">Lactococcus lactis subsp. cremoris (strain SK11)</name>
    <dbReference type="NCBI Taxonomy" id="272622"/>
    <lineage>
        <taxon>Bacteria</taxon>
        <taxon>Bacillati</taxon>
        <taxon>Bacillota</taxon>
        <taxon>Bacilli</taxon>
        <taxon>Lactobacillales</taxon>
        <taxon>Streptococcaceae</taxon>
        <taxon>Lactococcus</taxon>
        <taxon>Lactococcus cremoris subsp. cremoris</taxon>
    </lineage>
</organism>
<dbReference type="EC" id="3.6.5.3" evidence="2"/>
<dbReference type="EMBL" id="CP000425">
    <property type="protein sequence ID" value="ABJ73533.1"/>
    <property type="molecule type" value="Genomic_DNA"/>
</dbReference>
<dbReference type="RefSeq" id="WP_003132374.1">
    <property type="nucleotide sequence ID" value="NC_008527.1"/>
</dbReference>
<dbReference type="SMR" id="Q02WY9"/>
<dbReference type="GeneID" id="89634082"/>
<dbReference type="KEGG" id="llc:LACR_2054"/>
<dbReference type="HOGENOM" id="CLU_007265_0_1_9"/>
<dbReference type="Proteomes" id="UP000000240">
    <property type="component" value="Chromosome"/>
</dbReference>
<dbReference type="GO" id="GO:0005829">
    <property type="term" value="C:cytosol"/>
    <property type="evidence" value="ECO:0007669"/>
    <property type="project" value="TreeGrafter"/>
</dbReference>
<dbReference type="GO" id="GO:0005525">
    <property type="term" value="F:GTP binding"/>
    <property type="evidence" value="ECO:0007669"/>
    <property type="project" value="UniProtKB-UniRule"/>
</dbReference>
<dbReference type="GO" id="GO:0003924">
    <property type="term" value="F:GTPase activity"/>
    <property type="evidence" value="ECO:0007669"/>
    <property type="project" value="InterPro"/>
</dbReference>
<dbReference type="GO" id="GO:0003746">
    <property type="term" value="F:translation elongation factor activity"/>
    <property type="evidence" value="ECO:0007669"/>
    <property type="project" value="UniProtKB-UniRule"/>
</dbReference>
<dbReference type="CDD" id="cd01884">
    <property type="entry name" value="EF_Tu"/>
    <property type="match status" value="1"/>
</dbReference>
<dbReference type="CDD" id="cd03697">
    <property type="entry name" value="EFTU_II"/>
    <property type="match status" value="1"/>
</dbReference>
<dbReference type="CDD" id="cd03707">
    <property type="entry name" value="EFTU_III"/>
    <property type="match status" value="1"/>
</dbReference>
<dbReference type="FunFam" id="2.40.30.10:FF:000001">
    <property type="entry name" value="Elongation factor Tu"/>
    <property type="match status" value="1"/>
</dbReference>
<dbReference type="FunFam" id="3.40.50.300:FF:000003">
    <property type="entry name" value="Elongation factor Tu"/>
    <property type="match status" value="1"/>
</dbReference>
<dbReference type="Gene3D" id="3.40.50.300">
    <property type="entry name" value="P-loop containing nucleotide triphosphate hydrolases"/>
    <property type="match status" value="1"/>
</dbReference>
<dbReference type="Gene3D" id="2.40.30.10">
    <property type="entry name" value="Translation factors"/>
    <property type="match status" value="2"/>
</dbReference>
<dbReference type="HAMAP" id="MF_00118_B">
    <property type="entry name" value="EF_Tu_B"/>
    <property type="match status" value="1"/>
</dbReference>
<dbReference type="InterPro" id="IPR041709">
    <property type="entry name" value="EF-Tu_GTP-bd"/>
</dbReference>
<dbReference type="InterPro" id="IPR050055">
    <property type="entry name" value="EF-Tu_GTPase"/>
</dbReference>
<dbReference type="InterPro" id="IPR004161">
    <property type="entry name" value="EFTu-like_2"/>
</dbReference>
<dbReference type="InterPro" id="IPR033720">
    <property type="entry name" value="EFTU_2"/>
</dbReference>
<dbReference type="InterPro" id="IPR031157">
    <property type="entry name" value="G_TR_CS"/>
</dbReference>
<dbReference type="InterPro" id="IPR027417">
    <property type="entry name" value="P-loop_NTPase"/>
</dbReference>
<dbReference type="InterPro" id="IPR005225">
    <property type="entry name" value="Small_GTP-bd"/>
</dbReference>
<dbReference type="InterPro" id="IPR000795">
    <property type="entry name" value="T_Tr_GTP-bd_dom"/>
</dbReference>
<dbReference type="InterPro" id="IPR009000">
    <property type="entry name" value="Transl_B-barrel_sf"/>
</dbReference>
<dbReference type="InterPro" id="IPR009001">
    <property type="entry name" value="Transl_elong_EF1A/Init_IF2_C"/>
</dbReference>
<dbReference type="InterPro" id="IPR004541">
    <property type="entry name" value="Transl_elong_EFTu/EF1A_bac/org"/>
</dbReference>
<dbReference type="InterPro" id="IPR004160">
    <property type="entry name" value="Transl_elong_EFTu/EF1A_C"/>
</dbReference>
<dbReference type="NCBIfam" id="TIGR00485">
    <property type="entry name" value="EF-Tu"/>
    <property type="match status" value="1"/>
</dbReference>
<dbReference type="NCBIfam" id="NF000766">
    <property type="entry name" value="PRK00049.1"/>
    <property type="match status" value="1"/>
</dbReference>
<dbReference type="NCBIfam" id="NF009372">
    <property type="entry name" value="PRK12735.1"/>
    <property type="match status" value="1"/>
</dbReference>
<dbReference type="NCBIfam" id="NF009373">
    <property type="entry name" value="PRK12736.1"/>
    <property type="match status" value="1"/>
</dbReference>
<dbReference type="NCBIfam" id="TIGR00231">
    <property type="entry name" value="small_GTP"/>
    <property type="match status" value="1"/>
</dbReference>
<dbReference type="PANTHER" id="PTHR43721:SF22">
    <property type="entry name" value="ELONGATION FACTOR TU, MITOCHONDRIAL"/>
    <property type="match status" value="1"/>
</dbReference>
<dbReference type="PANTHER" id="PTHR43721">
    <property type="entry name" value="ELONGATION FACTOR TU-RELATED"/>
    <property type="match status" value="1"/>
</dbReference>
<dbReference type="Pfam" id="PF00009">
    <property type="entry name" value="GTP_EFTU"/>
    <property type="match status" value="1"/>
</dbReference>
<dbReference type="Pfam" id="PF03144">
    <property type="entry name" value="GTP_EFTU_D2"/>
    <property type="match status" value="1"/>
</dbReference>
<dbReference type="Pfam" id="PF03143">
    <property type="entry name" value="GTP_EFTU_D3"/>
    <property type="match status" value="1"/>
</dbReference>
<dbReference type="PRINTS" id="PR00315">
    <property type="entry name" value="ELONGATNFCT"/>
</dbReference>
<dbReference type="SUPFAM" id="SSF50465">
    <property type="entry name" value="EF-Tu/eEF-1alpha/eIF2-gamma C-terminal domain"/>
    <property type="match status" value="1"/>
</dbReference>
<dbReference type="SUPFAM" id="SSF52540">
    <property type="entry name" value="P-loop containing nucleoside triphosphate hydrolases"/>
    <property type="match status" value="1"/>
</dbReference>
<dbReference type="SUPFAM" id="SSF50447">
    <property type="entry name" value="Translation proteins"/>
    <property type="match status" value="1"/>
</dbReference>
<dbReference type="PROSITE" id="PS00301">
    <property type="entry name" value="G_TR_1"/>
    <property type="match status" value="1"/>
</dbReference>
<dbReference type="PROSITE" id="PS51722">
    <property type="entry name" value="G_TR_2"/>
    <property type="match status" value="1"/>
</dbReference>
<protein>
    <recommendedName>
        <fullName evidence="2">Elongation factor Tu</fullName>
        <shortName evidence="2">EF-Tu</shortName>
        <ecNumber evidence="2">3.6.5.3</ecNumber>
    </recommendedName>
</protein>
<feature type="chain" id="PRO_1000015677" description="Elongation factor Tu">
    <location>
        <begin position="1"/>
        <end position="395"/>
    </location>
</feature>
<feature type="domain" description="tr-type G">
    <location>
        <begin position="10"/>
        <end position="204"/>
    </location>
</feature>
<feature type="region of interest" description="G1" evidence="1">
    <location>
        <begin position="19"/>
        <end position="26"/>
    </location>
</feature>
<feature type="region of interest" description="G2" evidence="1">
    <location>
        <begin position="60"/>
        <end position="64"/>
    </location>
</feature>
<feature type="region of interest" description="G3" evidence="1">
    <location>
        <begin position="81"/>
        <end position="84"/>
    </location>
</feature>
<feature type="region of interest" description="G4" evidence="1">
    <location>
        <begin position="136"/>
        <end position="139"/>
    </location>
</feature>
<feature type="region of interest" description="G5" evidence="1">
    <location>
        <begin position="174"/>
        <end position="176"/>
    </location>
</feature>
<feature type="binding site" evidence="2">
    <location>
        <begin position="19"/>
        <end position="26"/>
    </location>
    <ligand>
        <name>GTP</name>
        <dbReference type="ChEBI" id="CHEBI:37565"/>
    </ligand>
</feature>
<feature type="binding site" evidence="2">
    <location>
        <position position="26"/>
    </location>
    <ligand>
        <name>Mg(2+)</name>
        <dbReference type="ChEBI" id="CHEBI:18420"/>
    </ligand>
</feature>
<feature type="binding site" evidence="2">
    <location>
        <begin position="81"/>
        <end position="85"/>
    </location>
    <ligand>
        <name>GTP</name>
        <dbReference type="ChEBI" id="CHEBI:37565"/>
    </ligand>
</feature>
<feature type="binding site" evidence="2">
    <location>
        <begin position="136"/>
        <end position="139"/>
    </location>
    <ligand>
        <name>GTP</name>
        <dbReference type="ChEBI" id="CHEBI:37565"/>
    </ligand>
</feature>
<accession>Q02WY9</accession>
<sequence>MAKEVYDRSKPHVNIGTIGHVDHGKTTLSAAISKVLSDKGYSKATDFASIDAAPEERERGITINTAHIEYETEKRHYAHIDAPGHADYVKNMITGAAQMDGAILVVAATDGPMPQTREHILLSRQVGVKYLIVFLNKADLVDDEELMELVEMEVRDLLSEYDFPGDDIPVIAGSALGALNGEPQWVAKVEELMDIVDEYIPTPERDTDKPLLLPVEDVFSITGRGTVASGRIERGTVKVGDEVEIVGIKEETKKAVVTGIEMFRKTLTEGLAGDNVGALLRGIQRDEIERGQVIAKPGSITPHKLFEGEVYVLSKEEGGRHTPFFDNYRPQFYFHTTDVTGSVKLPEGTEMVMPGDNVHIDVELIHPVAIEQGTTFSIREGGRTVGSGIVAEIKA</sequence>
<reference key="1">
    <citation type="journal article" date="2006" name="Proc. Natl. Acad. Sci. U.S.A.">
        <title>Comparative genomics of the lactic acid bacteria.</title>
        <authorList>
            <person name="Makarova K.S."/>
            <person name="Slesarev A."/>
            <person name="Wolf Y.I."/>
            <person name="Sorokin A."/>
            <person name="Mirkin B."/>
            <person name="Koonin E.V."/>
            <person name="Pavlov A."/>
            <person name="Pavlova N."/>
            <person name="Karamychev V."/>
            <person name="Polouchine N."/>
            <person name="Shakhova V."/>
            <person name="Grigoriev I."/>
            <person name="Lou Y."/>
            <person name="Rohksar D."/>
            <person name="Lucas S."/>
            <person name="Huang K."/>
            <person name="Goodstein D.M."/>
            <person name="Hawkins T."/>
            <person name="Plengvidhya V."/>
            <person name="Welker D."/>
            <person name="Hughes J."/>
            <person name="Goh Y."/>
            <person name="Benson A."/>
            <person name="Baldwin K."/>
            <person name="Lee J.-H."/>
            <person name="Diaz-Muniz I."/>
            <person name="Dosti B."/>
            <person name="Smeianov V."/>
            <person name="Wechter W."/>
            <person name="Barabote R."/>
            <person name="Lorca G."/>
            <person name="Altermann E."/>
            <person name="Barrangou R."/>
            <person name="Ganesan B."/>
            <person name="Xie Y."/>
            <person name="Rawsthorne H."/>
            <person name="Tamir D."/>
            <person name="Parker C."/>
            <person name="Breidt F."/>
            <person name="Broadbent J.R."/>
            <person name="Hutkins R."/>
            <person name="O'Sullivan D."/>
            <person name="Steele J."/>
            <person name="Unlu G."/>
            <person name="Saier M.H. Jr."/>
            <person name="Klaenhammer T."/>
            <person name="Richardson P."/>
            <person name="Kozyavkin S."/>
            <person name="Weimer B.C."/>
            <person name="Mills D.A."/>
        </authorList>
    </citation>
    <scope>NUCLEOTIDE SEQUENCE [LARGE SCALE GENOMIC DNA]</scope>
    <source>
        <strain>SK11</strain>
    </source>
</reference>
<evidence type="ECO:0000250" key="1"/>
<evidence type="ECO:0000255" key="2">
    <source>
        <dbReference type="HAMAP-Rule" id="MF_00118"/>
    </source>
</evidence>
<gene>
    <name evidence="2" type="primary">tuf</name>
    <name type="ordered locus">LACR_2054</name>
</gene>
<keyword id="KW-0963">Cytoplasm</keyword>
<keyword id="KW-0251">Elongation factor</keyword>
<keyword id="KW-0342">GTP-binding</keyword>
<keyword id="KW-0378">Hydrolase</keyword>
<keyword id="KW-0460">Magnesium</keyword>
<keyword id="KW-0479">Metal-binding</keyword>
<keyword id="KW-0547">Nucleotide-binding</keyword>
<keyword id="KW-0648">Protein biosynthesis</keyword>